<sequence length="312" mass="32625">MKVAVLGAAGGIGQALALLLKTQLPSGSDLSLYDIAPVTPGVAVDLSHIPTAVNIKGFSGEDATPALQGADIVLISAGVARKPGMDRSDLFNVNAGIVRNLVEQIARTCPNALIGIITNPVNTTVAIAAEVLKKAGVYDKNKLFGITTLDTIRSNTFVAELKGKQPQDIEVPVIGGHSGVTILPLLSQIPGVSFTEQEVADLTKRIQNAGTEVVEAKAGGGSATLSMGQAAARFGLSLVRALQGESNVVECSYVEGDGKYARFFAQPILLGKNGVAERKDIGKLSAFEQQALENMLDVLHKDIELGEKFVNQ</sequence>
<name>MDH_YERPE</name>
<feature type="chain" id="PRO_0000113335" description="Malate dehydrogenase">
    <location>
        <begin position="1"/>
        <end position="312"/>
    </location>
</feature>
<feature type="active site" description="Proton acceptor" evidence="1">
    <location>
        <position position="177"/>
    </location>
</feature>
<feature type="binding site" evidence="1">
    <location>
        <begin position="7"/>
        <end position="13"/>
    </location>
    <ligand>
        <name>NAD(+)</name>
        <dbReference type="ChEBI" id="CHEBI:57540"/>
    </ligand>
</feature>
<feature type="binding site" evidence="1">
    <location>
        <position position="34"/>
    </location>
    <ligand>
        <name>NAD(+)</name>
        <dbReference type="ChEBI" id="CHEBI:57540"/>
    </ligand>
</feature>
<feature type="binding site" evidence="1">
    <location>
        <position position="81"/>
    </location>
    <ligand>
        <name>substrate</name>
    </ligand>
</feature>
<feature type="binding site" evidence="1">
    <location>
        <position position="87"/>
    </location>
    <ligand>
        <name>substrate</name>
    </ligand>
</feature>
<feature type="binding site" evidence="1">
    <location>
        <position position="94"/>
    </location>
    <ligand>
        <name>NAD(+)</name>
        <dbReference type="ChEBI" id="CHEBI:57540"/>
    </ligand>
</feature>
<feature type="binding site" evidence="1">
    <location>
        <begin position="117"/>
        <end position="119"/>
    </location>
    <ligand>
        <name>NAD(+)</name>
        <dbReference type="ChEBI" id="CHEBI:57540"/>
    </ligand>
</feature>
<feature type="binding site" evidence="1">
    <location>
        <position position="119"/>
    </location>
    <ligand>
        <name>substrate</name>
    </ligand>
</feature>
<feature type="binding site" evidence="1">
    <location>
        <position position="153"/>
    </location>
    <ligand>
        <name>substrate</name>
    </ligand>
</feature>
<feature type="binding site" evidence="1">
    <location>
        <position position="227"/>
    </location>
    <ligand>
        <name>NAD(+)</name>
        <dbReference type="ChEBI" id="CHEBI:57540"/>
    </ligand>
</feature>
<keyword id="KW-0520">NAD</keyword>
<keyword id="KW-0560">Oxidoreductase</keyword>
<keyword id="KW-1185">Reference proteome</keyword>
<keyword id="KW-0816">Tricarboxylic acid cycle</keyword>
<gene>
    <name evidence="1" type="primary">mdh</name>
    <name type="ordered locus">YPO3516</name>
    <name type="ordered locus">y0668</name>
    <name type="ordered locus">YP_0567</name>
</gene>
<proteinExistence type="inferred from homology"/>
<dbReference type="EC" id="1.1.1.37" evidence="1"/>
<dbReference type="EMBL" id="AF282309">
    <property type="protein sequence ID" value="AAG21998.1"/>
    <property type="molecule type" value="Genomic_DNA"/>
</dbReference>
<dbReference type="EMBL" id="AL590842">
    <property type="protein sequence ID" value="CAL22104.1"/>
    <property type="molecule type" value="Genomic_DNA"/>
</dbReference>
<dbReference type="EMBL" id="AE009952">
    <property type="protein sequence ID" value="AAM84256.1"/>
    <property type="molecule type" value="Genomic_DNA"/>
</dbReference>
<dbReference type="EMBL" id="AE017042">
    <property type="protein sequence ID" value="AAS60837.1"/>
    <property type="molecule type" value="Genomic_DNA"/>
</dbReference>
<dbReference type="PIR" id="AE0427">
    <property type="entry name" value="AE0427"/>
</dbReference>
<dbReference type="RefSeq" id="WP_002210174.1">
    <property type="nucleotide sequence ID" value="NZ_WUCM01000036.1"/>
</dbReference>
<dbReference type="RefSeq" id="YP_002348405.1">
    <property type="nucleotide sequence ID" value="NC_003143.1"/>
</dbReference>
<dbReference type="SMR" id="P61892"/>
<dbReference type="STRING" id="214092.YPO3516"/>
<dbReference type="PaxDb" id="214092-YPO3516"/>
<dbReference type="DNASU" id="1145615"/>
<dbReference type="EnsemblBacteria" id="AAS60837">
    <property type="protein sequence ID" value="AAS60837"/>
    <property type="gene ID" value="YP_0567"/>
</dbReference>
<dbReference type="GeneID" id="57975198"/>
<dbReference type="KEGG" id="ype:YPO3516"/>
<dbReference type="KEGG" id="ypk:y0668"/>
<dbReference type="KEGG" id="ypm:YP_0567"/>
<dbReference type="PATRIC" id="fig|214092.21.peg.4010"/>
<dbReference type="eggNOG" id="COG0039">
    <property type="taxonomic scope" value="Bacteria"/>
</dbReference>
<dbReference type="HOGENOM" id="CLU_047181_1_0_6"/>
<dbReference type="OMA" id="ASCAEYI"/>
<dbReference type="OrthoDB" id="9802969at2"/>
<dbReference type="Proteomes" id="UP000000815">
    <property type="component" value="Chromosome"/>
</dbReference>
<dbReference type="Proteomes" id="UP000001019">
    <property type="component" value="Chromosome"/>
</dbReference>
<dbReference type="Proteomes" id="UP000002490">
    <property type="component" value="Chromosome"/>
</dbReference>
<dbReference type="GO" id="GO:0005737">
    <property type="term" value="C:cytoplasm"/>
    <property type="evidence" value="ECO:0000318"/>
    <property type="project" value="GO_Central"/>
</dbReference>
<dbReference type="GO" id="GO:0030060">
    <property type="term" value="F:L-malate dehydrogenase (NAD+) activity"/>
    <property type="evidence" value="ECO:0000318"/>
    <property type="project" value="GO_Central"/>
</dbReference>
<dbReference type="GO" id="GO:0006108">
    <property type="term" value="P:malate metabolic process"/>
    <property type="evidence" value="ECO:0007669"/>
    <property type="project" value="InterPro"/>
</dbReference>
<dbReference type="GO" id="GO:0006099">
    <property type="term" value="P:tricarboxylic acid cycle"/>
    <property type="evidence" value="ECO:0007669"/>
    <property type="project" value="UniProtKB-UniRule"/>
</dbReference>
<dbReference type="CDD" id="cd01337">
    <property type="entry name" value="MDH_glyoxysomal_mitochondrial"/>
    <property type="match status" value="1"/>
</dbReference>
<dbReference type="FunFam" id="3.40.50.720:FF:000017">
    <property type="entry name" value="Malate dehydrogenase"/>
    <property type="match status" value="1"/>
</dbReference>
<dbReference type="FunFam" id="3.90.110.10:FF:000001">
    <property type="entry name" value="Malate dehydrogenase"/>
    <property type="match status" value="1"/>
</dbReference>
<dbReference type="Gene3D" id="3.90.110.10">
    <property type="entry name" value="Lactate dehydrogenase/glycoside hydrolase, family 4, C-terminal"/>
    <property type="match status" value="1"/>
</dbReference>
<dbReference type="Gene3D" id="3.40.50.720">
    <property type="entry name" value="NAD(P)-binding Rossmann-like Domain"/>
    <property type="match status" value="1"/>
</dbReference>
<dbReference type="HAMAP" id="MF_01516">
    <property type="entry name" value="Malate_dehydrog_1"/>
    <property type="match status" value="1"/>
</dbReference>
<dbReference type="InterPro" id="IPR001557">
    <property type="entry name" value="L-lactate/malate_DH"/>
</dbReference>
<dbReference type="InterPro" id="IPR022383">
    <property type="entry name" value="Lactate/malate_DH_C"/>
</dbReference>
<dbReference type="InterPro" id="IPR001236">
    <property type="entry name" value="Lactate/malate_DH_N"/>
</dbReference>
<dbReference type="InterPro" id="IPR015955">
    <property type="entry name" value="Lactate_DH/Glyco_Ohase_4_C"/>
</dbReference>
<dbReference type="InterPro" id="IPR001252">
    <property type="entry name" value="Malate_DH_AS"/>
</dbReference>
<dbReference type="InterPro" id="IPR010097">
    <property type="entry name" value="Malate_DH_type1"/>
</dbReference>
<dbReference type="InterPro" id="IPR023958">
    <property type="entry name" value="Malate_DH_type1_bac"/>
</dbReference>
<dbReference type="InterPro" id="IPR036291">
    <property type="entry name" value="NAD(P)-bd_dom_sf"/>
</dbReference>
<dbReference type="NCBIfam" id="TIGR01772">
    <property type="entry name" value="MDH_euk_gproteo"/>
    <property type="match status" value="1"/>
</dbReference>
<dbReference type="PANTHER" id="PTHR11540">
    <property type="entry name" value="MALATE AND LACTATE DEHYDROGENASE"/>
    <property type="match status" value="1"/>
</dbReference>
<dbReference type="PANTHER" id="PTHR11540:SF16">
    <property type="entry name" value="MALATE DEHYDROGENASE, MITOCHONDRIAL"/>
    <property type="match status" value="1"/>
</dbReference>
<dbReference type="Pfam" id="PF02866">
    <property type="entry name" value="Ldh_1_C"/>
    <property type="match status" value="1"/>
</dbReference>
<dbReference type="Pfam" id="PF00056">
    <property type="entry name" value="Ldh_1_N"/>
    <property type="match status" value="1"/>
</dbReference>
<dbReference type="PIRSF" id="PIRSF000102">
    <property type="entry name" value="Lac_mal_DH"/>
    <property type="match status" value="1"/>
</dbReference>
<dbReference type="SUPFAM" id="SSF56327">
    <property type="entry name" value="LDH C-terminal domain-like"/>
    <property type="match status" value="1"/>
</dbReference>
<dbReference type="SUPFAM" id="SSF51735">
    <property type="entry name" value="NAD(P)-binding Rossmann-fold domains"/>
    <property type="match status" value="1"/>
</dbReference>
<dbReference type="PROSITE" id="PS00068">
    <property type="entry name" value="MDH"/>
    <property type="match status" value="1"/>
</dbReference>
<protein>
    <recommendedName>
        <fullName evidence="1">Malate dehydrogenase</fullName>
        <ecNumber evidence="1">1.1.1.37</ecNumber>
    </recommendedName>
</protein>
<comment type="function">
    <text evidence="1">Catalyzes the reversible oxidation of malate to oxaloacetate.</text>
</comment>
<comment type="catalytic activity">
    <reaction evidence="1">
        <text>(S)-malate + NAD(+) = oxaloacetate + NADH + H(+)</text>
        <dbReference type="Rhea" id="RHEA:21432"/>
        <dbReference type="ChEBI" id="CHEBI:15378"/>
        <dbReference type="ChEBI" id="CHEBI:15589"/>
        <dbReference type="ChEBI" id="CHEBI:16452"/>
        <dbReference type="ChEBI" id="CHEBI:57540"/>
        <dbReference type="ChEBI" id="CHEBI:57945"/>
        <dbReference type="EC" id="1.1.1.37"/>
    </reaction>
</comment>
<comment type="subunit">
    <text evidence="1">Homodimer.</text>
</comment>
<comment type="similarity">
    <text evidence="1">Belongs to the LDH/MDH superfamily. MDH type 1 family.</text>
</comment>
<organism>
    <name type="scientific">Yersinia pestis</name>
    <dbReference type="NCBI Taxonomy" id="632"/>
    <lineage>
        <taxon>Bacteria</taxon>
        <taxon>Pseudomonadati</taxon>
        <taxon>Pseudomonadota</taxon>
        <taxon>Gammaproteobacteria</taxon>
        <taxon>Enterobacterales</taxon>
        <taxon>Yersiniaceae</taxon>
        <taxon>Yersinia</taxon>
    </lineage>
</organism>
<accession>P61892</accession>
<accession>Q0WBD3</accession>
<accession>Q9ETQ6</accession>
<evidence type="ECO:0000255" key="1">
    <source>
        <dbReference type="HAMAP-Rule" id="MF_01516"/>
    </source>
</evidence>
<reference key="1">
    <citation type="submission" date="2000-06" db="EMBL/GenBank/DDBJ databases">
        <title>Molecular epidemiology of Yersinia pestis.</title>
        <authorList>
            <person name="Lindler L.E."/>
            <person name="Huang X."/>
            <person name="Chu M."/>
            <person name="Popek M."/>
        </authorList>
    </citation>
    <scope>NUCLEOTIDE SEQUENCE [GENOMIC DNA]</scope>
    <source>
        <strain>KIM</strain>
    </source>
</reference>
<reference key="2">
    <citation type="journal article" date="2001" name="Nature">
        <title>Genome sequence of Yersinia pestis, the causative agent of plague.</title>
        <authorList>
            <person name="Parkhill J."/>
            <person name="Wren B.W."/>
            <person name="Thomson N.R."/>
            <person name="Titball R.W."/>
            <person name="Holden M.T.G."/>
            <person name="Prentice M.B."/>
            <person name="Sebaihia M."/>
            <person name="James K.D."/>
            <person name="Churcher C.M."/>
            <person name="Mungall K.L."/>
            <person name="Baker S."/>
            <person name="Basham D."/>
            <person name="Bentley S.D."/>
            <person name="Brooks K."/>
            <person name="Cerdeno-Tarraga A.-M."/>
            <person name="Chillingworth T."/>
            <person name="Cronin A."/>
            <person name="Davies R.M."/>
            <person name="Davis P."/>
            <person name="Dougan G."/>
            <person name="Feltwell T."/>
            <person name="Hamlin N."/>
            <person name="Holroyd S."/>
            <person name="Jagels K."/>
            <person name="Karlyshev A.V."/>
            <person name="Leather S."/>
            <person name="Moule S."/>
            <person name="Oyston P.C.F."/>
            <person name="Quail M.A."/>
            <person name="Rutherford K.M."/>
            <person name="Simmonds M."/>
            <person name="Skelton J."/>
            <person name="Stevens K."/>
            <person name="Whitehead S."/>
            <person name="Barrell B.G."/>
        </authorList>
    </citation>
    <scope>NUCLEOTIDE SEQUENCE [LARGE SCALE GENOMIC DNA]</scope>
    <source>
        <strain>CO-92 / Biovar Orientalis</strain>
    </source>
</reference>
<reference key="3">
    <citation type="journal article" date="2002" name="J. Bacteriol.">
        <title>Genome sequence of Yersinia pestis KIM.</title>
        <authorList>
            <person name="Deng W."/>
            <person name="Burland V."/>
            <person name="Plunkett G. III"/>
            <person name="Boutin A."/>
            <person name="Mayhew G.F."/>
            <person name="Liss P."/>
            <person name="Perna N.T."/>
            <person name="Rose D.J."/>
            <person name="Mau B."/>
            <person name="Zhou S."/>
            <person name="Schwartz D.C."/>
            <person name="Fetherston J.D."/>
            <person name="Lindler L.E."/>
            <person name="Brubaker R.R."/>
            <person name="Plano G.V."/>
            <person name="Straley S.C."/>
            <person name="McDonough K.A."/>
            <person name="Nilles M.L."/>
            <person name="Matson J.S."/>
            <person name="Blattner F.R."/>
            <person name="Perry R.D."/>
        </authorList>
    </citation>
    <scope>NUCLEOTIDE SEQUENCE [LARGE SCALE GENOMIC DNA]</scope>
    <source>
        <strain>KIM10+ / Biovar Mediaevalis</strain>
    </source>
</reference>
<reference key="4">
    <citation type="journal article" date="2004" name="DNA Res.">
        <title>Complete genome sequence of Yersinia pestis strain 91001, an isolate avirulent to humans.</title>
        <authorList>
            <person name="Song Y."/>
            <person name="Tong Z."/>
            <person name="Wang J."/>
            <person name="Wang L."/>
            <person name="Guo Z."/>
            <person name="Han Y."/>
            <person name="Zhang J."/>
            <person name="Pei D."/>
            <person name="Zhou D."/>
            <person name="Qin H."/>
            <person name="Pang X."/>
            <person name="Han Y."/>
            <person name="Zhai J."/>
            <person name="Li M."/>
            <person name="Cui B."/>
            <person name="Qi Z."/>
            <person name="Jin L."/>
            <person name="Dai R."/>
            <person name="Chen F."/>
            <person name="Li S."/>
            <person name="Ye C."/>
            <person name="Du Z."/>
            <person name="Lin W."/>
            <person name="Wang J."/>
            <person name="Yu J."/>
            <person name="Yang H."/>
            <person name="Wang J."/>
            <person name="Huang P."/>
            <person name="Yang R."/>
        </authorList>
    </citation>
    <scope>NUCLEOTIDE SEQUENCE [LARGE SCALE GENOMIC DNA]</scope>
    <source>
        <strain>91001 / Biovar Mediaevalis</strain>
    </source>
</reference>